<feature type="chain" id="PRO_1000070493" description="Enoyl-[acyl-carrier-protein] reductase [NADH]">
    <location>
        <begin position="1"/>
        <end position="395"/>
    </location>
</feature>
<feature type="active site" description="Proton donor" evidence="1">
    <location>
        <position position="235"/>
    </location>
</feature>
<feature type="binding site" evidence="1">
    <location>
        <begin position="48"/>
        <end position="53"/>
    </location>
    <ligand>
        <name>NAD(+)</name>
        <dbReference type="ChEBI" id="CHEBI:57540"/>
    </ligand>
</feature>
<feature type="binding site" evidence="1">
    <location>
        <begin position="74"/>
        <end position="75"/>
    </location>
    <ligand>
        <name>NAD(+)</name>
        <dbReference type="ChEBI" id="CHEBI:57540"/>
    </ligand>
</feature>
<feature type="binding site" evidence="1">
    <location>
        <begin position="111"/>
        <end position="112"/>
    </location>
    <ligand>
        <name>NAD(+)</name>
        <dbReference type="ChEBI" id="CHEBI:57540"/>
    </ligand>
</feature>
<feature type="binding site" evidence="1">
    <location>
        <begin position="139"/>
        <end position="140"/>
    </location>
    <ligand>
        <name>NAD(+)</name>
        <dbReference type="ChEBI" id="CHEBI:57540"/>
    </ligand>
</feature>
<feature type="binding site" evidence="1">
    <location>
        <position position="225"/>
    </location>
    <ligand>
        <name>substrate</name>
    </ligand>
</feature>
<feature type="binding site" evidence="1">
    <location>
        <position position="244"/>
    </location>
    <ligand>
        <name>NAD(+)</name>
        <dbReference type="ChEBI" id="CHEBI:57540"/>
    </ligand>
</feature>
<feature type="binding site" evidence="1">
    <location>
        <begin position="273"/>
        <end position="275"/>
    </location>
    <ligand>
        <name>NAD(+)</name>
        <dbReference type="ChEBI" id="CHEBI:57540"/>
    </ligand>
</feature>
<feature type="site" description="Plays an important role in discriminating NADH against NADPH" evidence="1">
    <location>
        <position position="75"/>
    </location>
</feature>
<accession>Q21HE4</accession>
<organism>
    <name type="scientific">Saccharophagus degradans (strain 2-40 / ATCC 43961 / DSM 17024)</name>
    <dbReference type="NCBI Taxonomy" id="203122"/>
    <lineage>
        <taxon>Bacteria</taxon>
        <taxon>Pseudomonadati</taxon>
        <taxon>Pseudomonadota</taxon>
        <taxon>Gammaproteobacteria</taxon>
        <taxon>Cellvibrionales</taxon>
        <taxon>Cellvibrionaceae</taxon>
        <taxon>Saccharophagus</taxon>
    </lineage>
</organism>
<gene>
    <name evidence="1" type="primary">fabV</name>
    <name type="ordered locus">Sde_2625</name>
</gene>
<keyword id="KW-0275">Fatty acid biosynthesis</keyword>
<keyword id="KW-0276">Fatty acid metabolism</keyword>
<keyword id="KW-0444">Lipid biosynthesis</keyword>
<keyword id="KW-0443">Lipid metabolism</keyword>
<keyword id="KW-0520">NAD</keyword>
<keyword id="KW-0560">Oxidoreductase</keyword>
<keyword id="KW-1185">Reference proteome</keyword>
<reference key="1">
    <citation type="journal article" date="2008" name="PLoS Genet.">
        <title>Complete genome sequence of the complex carbohydrate-degrading marine bacterium, Saccharophagus degradans strain 2-40 T.</title>
        <authorList>
            <person name="Weiner R.M."/>
            <person name="Taylor L.E. II"/>
            <person name="Henrissat B."/>
            <person name="Hauser L."/>
            <person name="Land M."/>
            <person name="Coutinho P.M."/>
            <person name="Rancurel C."/>
            <person name="Saunders E.H."/>
            <person name="Longmire A.G."/>
            <person name="Zhang H."/>
            <person name="Bayer E.A."/>
            <person name="Gilbert H.J."/>
            <person name="Larimer F."/>
            <person name="Zhulin I.B."/>
            <person name="Ekborg N.A."/>
            <person name="Lamed R."/>
            <person name="Richardson P.M."/>
            <person name="Borovok I."/>
            <person name="Hutcheson S."/>
        </authorList>
    </citation>
    <scope>NUCLEOTIDE SEQUENCE [LARGE SCALE GENOMIC DNA]</scope>
    <source>
        <strain>2-40 / ATCC 43961 / DSM 17024</strain>
    </source>
</reference>
<protein>
    <recommendedName>
        <fullName evidence="1">Enoyl-[acyl-carrier-protein] reductase [NADH]</fullName>
        <shortName evidence="1">ENR</shortName>
        <ecNumber evidence="1">1.3.1.9</ecNumber>
    </recommendedName>
</protein>
<dbReference type="EC" id="1.3.1.9" evidence="1"/>
<dbReference type="EMBL" id="CP000282">
    <property type="protein sequence ID" value="ABD81885.1"/>
    <property type="molecule type" value="Genomic_DNA"/>
</dbReference>
<dbReference type="RefSeq" id="WP_011469102.1">
    <property type="nucleotide sequence ID" value="NC_007912.1"/>
</dbReference>
<dbReference type="SMR" id="Q21HE4"/>
<dbReference type="STRING" id="203122.Sde_2625"/>
<dbReference type="GeneID" id="98614286"/>
<dbReference type="KEGG" id="sde:Sde_2625"/>
<dbReference type="eggNOG" id="COG3007">
    <property type="taxonomic scope" value="Bacteria"/>
</dbReference>
<dbReference type="HOGENOM" id="CLU_057698_1_0_6"/>
<dbReference type="OrthoDB" id="9802260at2"/>
<dbReference type="UniPathway" id="UPA00094"/>
<dbReference type="Proteomes" id="UP000001947">
    <property type="component" value="Chromosome"/>
</dbReference>
<dbReference type="GO" id="GO:0004318">
    <property type="term" value="F:enoyl-[acyl-carrier-protein] reductase (NADH) activity"/>
    <property type="evidence" value="ECO:0007669"/>
    <property type="project" value="UniProtKB-UniRule"/>
</dbReference>
<dbReference type="GO" id="GO:0051287">
    <property type="term" value="F:NAD binding"/>
    <property type="evidence" value="ECO:0007669"/>
    <property type="project" value="UniProtKB-UniRule"/>
</dbReference>
<dbReference type="GO" id="GO:0050343">
    <property type="term" value="F:trans-2-enoyl-CoA reductase (NADH) activity"/>
    <property type="evidence" value="ECO:0007669"/>
    <property type="project" value="TreeGrafter"/>
</dbReference>
<dbReference type="GO" id="GO:0006633">
    <property type="term" value="P:fatty acid biosynthetic process"/>
    <property type="evidence" value="ECO:0007669"/>
    <property type="project" value="UniProtKB-UniRule"/>
</dbReference>
<dbReference type="FunFam" id="3.40.50.720:FF:000221">
    <property type="entry name" value="Enoyl-[acyl-carrier-protein] reductase [NADH]"/>
    <property type="match status" value="1"/>
</dbReference>
<dbReference type="Gene3D" id="3.40.50.720">
    <property type="entry name" value="NAD(P)-binding Rossmann-like Domain"/>
    <property type="match status" value="1"/>
</dbReference>
<dbReference type="HAMAP" id="MF_01838">
    <property type="entry name" value="FabV_reductase"/>
    <property type="match status" value="1"/>
</dbReference>
<dbReference type="InterPro" id="IPR024906">
    <property type="entry name" value="Eno_Rdtase_FAD-bd_dom"/>
</dbReference>
<dbReference type="InterPro" id="IPR024910">
    <property type="entry name" value="Enoyl-CoA_Rdtase_cat_dom"/>
</dbReference>
<dbReference type="InterPro" id="IPR050048">
    <property type="entry name" value="FabV-like_NADH_b"/>
</dbReference>
<dbReference type="InterPro" id="IPR010758">
    <property type="entry name" value="Trans-2-enoyl-CoA_reductase"/>
</dbReference>
<dbReference type="NCBIfam" id="NF043048">
    <property type="entry name" value="EnoyACPredFabV"/>
    <property type="match status" value="1"/>
</dbReference>
<dbReference type="NCBIfam" id="NF010177">
    <property type="entry name" value="PRK13656.1"/>
    <property type="match status" value="1"/>
</dbReference>
<dbReference type="PANTHER" id="PTHR37480">
    <property type="entry name" value="ENOYL-[ACYL-CARRIER-PROTEIN] REDUCTASE [NADH]"/>
    <property type="match status" value="1"/>
</dbReference>
<dbReference type="PANTHER" id="PTHR37480:SF1">
    <property type="entry name" value="ENOYL-[ACYL-CARRIER-PROTEIN] REDUCTASE [NADH]"/>
    <property type="match status" value="1"/>
</dbReference>
<dbReference type="Pfam" id="PF07055">
    <property type="entry name" value="Eno-Rase_FAD_bd"/>
    <property type="match status" value="1"/>
</dbReference>
<dbReference type="Pfam" id="PF12242">
    <property type="entry name" value="Eno-Rase_NADH_b"/>
    <property type="match status" value="1"/>
</dbReference>
<dbReference type="Pfam" id="PF12241">
    <property type="entry name" value="Enoyl_reductase"/>
    <property type="match status" value="1"/>
</dbReference>
<name>FABV_SACD2</name>
<evidence type="ECO:0000255" key="1">
    <source>
        <dbReference type="HAMAP-Rule" id="MF_01838"/>
    </source>
</evidence>
<sequence>MIIKPKVRGFICTNAHPEGCAANVREQIDFVKSQGEIADGPKKVLVIGASTGYGLASRITAAFGCGAATLGVFFEKPGTERKTGSAGFYNSVGFHAEAEKAGLYAKSINGDAFSDEIKAKAIDVIKRDLGKVDLVVYSLASPRRTDPKTGELYSSVLKPIGQSYTAKNLNTDTLKIADMTIEAANEEEIANTVKVMGGEDWELWVEALKEADVLAENAKTVAYTYIGDKLTWPIYGKATIGRAKEDLDRAATAINQKLADLGGSANVAVLKALVTQSSSAIPIMPLYISILYKVMKEEGTHEGCIEQLYRLFTEGVYTDTPRLDDANRFRMDEKELAAELQAKVEAIWPNVTEENLFEETDYKGYNAEFLKLFGFGVDGIDYEKDVAPDVALDLE</sequence>
<proteinExistence type="inferred from homology"/>
<comment type="function">
    <text evidence="1">Involved in the final reduction of the elongation cycle of fatty acid synthesis (FAS II). Catalyzes the reduction of a carbon-carbon double bond in an enoyl moiety that is covalently linked to an acyl carrier protein (ACP).</text>
</comment>
<comment type="catalytic activity">
    <reaction evidence="1">
        <text>a 2,3-saturated acyl-[ACP] + NAD(+) = a (2E)-enoyl-[ACP] + NADH + H(+)</text>
        <dbReference type="Rhea" id="RHEA:10240"/>
        <dbReference type="Rhea" id="RHEA-COMP:9925"/>
        <dbReference type="Rhea" id="RHEA-COMP:9926"/>
        <dbReference type="ChEBI" id="CHEBI:15378"/>
        <dbReference type="ChEBI" id="CHEBI:57540"/>
        <dbReference type="ChEBI" id="CHEBI:57945"/>
        <dbReference type="ChEBI" id="CHEBI:78784"/>
        <dbReference type="ChEBI" id="CHEBI:78785"/>
        <dbReference type="EC" id="1.3.1.9"/>
    </reaction>
</comment>
<comment type="pathway">
    <text evidence="1">Lipid metabolism; fatty acid biosynthesis.</text>
</comment>
<comment type="subunit">
    <text evidence="1">Monomer.</text>
</comment>
<comment type="similarity">
    <text evidence="1">Belongs to the TER reductase family.</text>
</comment>